<gene>
    <name type="primary">ppiB</name>
    <name type="synonym">ppi</name>
    <name type="ordered locus">ML0492</name>
    <name type="ORF">B1177_F3_97</name>
    <name type="ORF">MLCB1259.10c</name>
</gene>
<protein>
    <recommendedName>
        <fullName>Probable peptidyl-prolyl cis-trans isomerase B</fullName>
        <shortName>PPIase B</shortName>
        <ecNumber>5.2.1.8</ecNumber>
    </recommendedName>
    <alternativeName>
        <fullName>Rotamase B</fullName>
    </alternativeName>
</protein>
<proteinExistence type="inferred from homology"/>
<evidence type="ECO:0000250" key="1"/>
<evidence type="ECO:0000255" key="2">
    <source>
        <dbReference type="PROSITE-ProRule" id="PRU00156"/>
    </source>
</evidence>
<evidence type="ECO:0000256" key="3">
    <source>
        <dbReference type="SAM" id="MobiDB-lite"/>
    </source>
</evidence>
<evidence type="ECO:0000305" key="4"/>
<feature type="chain" id="PRO_0000064211" description="Probable peptidyl-prolyl cis-trans isomerase B">
    <location>
        <begin position="1"/>
        <end position="295"/>
    </location>
</feature>
<feature type="domain" description="PPIase cyclophilin-type" evidence="2">
    <location>
        <begin position="126"/>
        <end position="294"/>
    </location>
</feature>
<feature type="region of interest" description="Disordered" evidence="3">
    <location>
        <begin position="105"/>
        <end position="128"/>
    </location>
</feature>
<feature type="region of interest" description="Disordered" evidence="3">
    <location>
        <begin position="274"/>
        <end position="295"/>
    </location>
</feature>
<sequence length="295" mass="31178">MPTNEQRRATAKRKLKRQLERRAKQARWRRVLLISGGVVVAVAVIITVVATVVISKLGHKHDTASSTASNSLTATKTPAVTPSVLPLPSFQPSTNLGVNCQYPPSADKAAKPVKPPRAGKVPTDPATVSASMATNQGNIGLLLNNAESPCTVNSFASLTGQGFFNNTKCHRLTTSLMLGVLQCGDPKVDGTGGPGYKFANEYPTDQYPPNDPKLKQPVLYPRGTLAMANSGPNTNGSQFFLVYHDSQLPPEYTVFGTIQADGLATLDKIAKGGIASGGDDGPPATEVTIESLRLD</sequence>
<keyword id="KW-0413">Isomerase</keyword>
<keyword id="KW-1185">Reference proteome</keyword>
<keyword id="KW-0697">Rotamase</keyword>
<name>PPIB_MYCLE</name>
<dbReference type="EC" id="5.2.1.8"/>
<dbReference type="EMBL" id="U00011">
    <property type="protein sequence ID" value="AAA17113.1"/>
    <property type="molecule type" value="Genomic_DNA"/>
</dbReference>
<dbReference type="EMBL" id="AL023591">
    <property type="protein sequence ID" value="CAA19085.1"/>
    <property type="molecule type" value="Genomic_DNA"/>
</dbReference>
<dbReference type="EMBL" id="AL583918">
    <property type="protein sequence ID" value="CAC30000.1"/>
    <property type="molecule type" value="Genomic_DNA"/>
</dbReference>
<dbReference type="PIR" id="S72749">
    <property type="entry name" value="S72749"/>
</dbReference>
<dbReference type="RefSeq" id="NP_301431.1">
    <property type="nucleotide sequence ID" value="NC_002677.1"/>
</dbReference>
<dbReference type="RefSeq" id="WP_010907755.1">
    <property type="nucleotide sequence ID" value="NC_002677.1"/>
</dbReference>
<dbReference type="SMR" id="P46697"/>
<dbReference type="STRING" id="272631.gene:17574313"/>
<dbReference type="KEGG" id="mle:ML0492"/>
<dbReference type="PATRIC" id="fig|272631.5.peg.856"/>
<dbReference type="Leproma" id="ML0492"/>
<dbReference type="eggNOG" id="COG0652">
    <property type="taxonomic scope" value="Bacteria"/>
</dbReference>
<dbReference type="HOGENOM" id="CLU_012062_8_0_11"/>
<dbReference type="OrthoDB" id="5507614at2"/>
<dbReference type="Proteomes" id="UP000000806">
    <property type="component" value="Chromosome"/>
</dbReference>
<dbReference type="GO" id="GO:0003755">
    <property type="term" value="F:peptidyl-prolyl cis-trans isomerase activity"/>
    <property type="evidence" value="ECO:0007669"/>
    <property type="project" value="UniProtKB-KW"/>
</dbReference>
<dbReference type="CDD" id="cd00317">
    <property type="entry name" value="cyclophilin"/>
    <property type="match status" value="1"/>
</dbReference>
<dbReference type="Gene3D" id="2.40.100.10">
    <property type="entry name" value="Cyclophilin-like"/>
    <property type="match status" value="1"/>
</dbReference>
<dbReference type="InterPro" id="IPR029000">
    <property type="entry name" value="Cyclophilin-like_dom_sf"/>
</dbReference>
<dbReference type="InterPro" id="IPR002130">
    <property type="entry name" value="Cyclophilin-type_PPIase_dom"/>
</dbReference>
<dbReference type="InterPro" id="IPR044666">
    <property type="entry name" value="Cyclophilin_A-like"/>
</dbReference>
<dbReference type="PANTHER" id="PTHR45625:SF3">
    <property type="entry name" value="PEPTIDYL-PROLYL CIS-TRANS ISOMERASE B-RELATED"/>
    <property type="match status" value="1"/>
</dbReference>
<dbReference type="PANTHER" id="PTHR45625">
    <property type="entry name" value="PEPTIDYL-PROLYL CIS-TRANS ISOMERASE-RELATED"/>
    <property type="match status" value="1"/>
</dbReference>
<dbReference type="Pfam" id="PF00160">
    <property type="entry name" value="Pro_isomerase"/>
    <property type="match status" value="1"/>
</dbReference>
<dbReference type="PRINTS" id="PR00153">
    <property type="entry name" value="CSAPPISMRASE"/>
</dbReference>
<dbReference type="SUPFAM" id="SSF50891">
    <property type="entry name" value="Cyclophilin-like"/>
    <property type="match status" value="1"/>
</dbReference>
<dbReference type="PROSITE" id="PS50072">
    <property type="entry name" value="CSA_PPIASE_2"/>
    <property type="match status" value="1"/>
</dbReference>
<comment type="function">
    <text evidence="1">PPIases accelerate the folding of proteins. It catalyzes the cis-trans isomerization of proline imidic peptide bonds in oligopeptides (By similarity).</text>
</comment>
<comment type="catalytic activity">
    <reaction>
        <text>[protein]-peptidylproline (omega=180) = [protein]-peptidylproline (omega=0)</text>
        <dbReference type="Rhea" id="RHEA:16237"/>
        <dbReference type="Rhea" id="RHEA-COMP:10747"/>
        <dbReference type="Rhea" id="RHEA-COMP:10748"/>
        <dbReference type="ChEBI" id="CHEBI:83833"/>
        <dbReference type="ChEBI" id="CHEBI:83834"/>
        <dbReference type="EC" id="5.2.1.8"/>
    </reaction>
</comment>
<comment type="similarity">
    <text evidence="4">Belongs to the cyclophilin-type PPIase family.</text>
</comment>
<accession>P46697</accession>
<organism>
    <name type="scientific">Mycobacterium leprae (strain TN)</name>
    <dbReference type="NCBI Taxonomy" id="272631"/>
    <lineage>
        <taxon>Bacteria</taxon>
        <taxon>Bacillati</taxon>
        <taxon>Actinomycetota</taxon>
        <taxon>Actinomycetes</taxon>
        <taxon>Mycobacteriales</taxon>
        <taxon>Mycobacteriaceae</taxon>
        <taxon>Mycobacterium</taxon>
    </lineage>
</organism>
<reference key="1">
    <citation type="submission" date="1994-03" db="EMBL/GenBank/DDBJ databases">
        <authorList>
            <person name="Smith D.R."/>
            <person name="Robison K."/>
        </authorList>
    </citation>
    <scope>NUCLEOTIDE SEQUENCE [GENOMIC DNA]</scope>
</reference>
<reference key="2">
    <citation type="journal article" date="2001" name="Nature">
        <title>Massive gene decay in the leprosy bacillus.</title>
        <authorList>
            <person name="Cole S.T."/>
            <person name="Eiglmeier K."/>
            <person name="Parkhill J."/>
            <person name="James K.D."/>
            <person name="Thomson N.R."/>
            <person name="Wheeler P.R."/>
            <person name="Honore N."/>
            <person name="Garnier T."/>
            <person name="Churcher C.M."/>
            <person name="Harris D.E."/>
            <person name="Mungall K.L."/>
            <person name="Basham D."/>
            <person name="Brown D."/>
            <person name="Chillingworth T."/>
            <person name="Connor R."/>
            <person name="Davies R.M."/>
            <person name="Devlin K."/>
            <person name="Duthoy S."/>
            <person name="Feltwell T."/>
            <person name="Fraser A."/>
            <person name="Hamlin N."/>
            <person name="Holroyd S."/>
            <person name="Hornsby T."/>
            <person name="Jagels K."/>
            <person name="Lacroix C."/>
            <person name="Maclean J."/>
            <person name="Moule S."/>
            <person name="Murphy L.D."/>
            <person name="Oliver K."/>
            <person name="Quail M.A."/>
            <person name="Rajandream M.A."/>
            <person name="Rutherford K.M."/>
            <person name="Rutter S."/>
            <person name="Seeger K."/>
            <person name="Simon S."/>
            <person name="Simmonds M."/>
            <person name="Skelton J."/>
            <person name="Squares R."/>
            <person name="Squares S."/>
            <person name="Stevens K."/>
            <person name="Taylor K."/>
            <person name="Whitehead S."/>
            <person name="Woodward J.R."/>
            <person name="Barrell B.G."/>
        </authorList>
    </citation>
    <scope>NUCLEOTIDE SEQUENCE [LARGE SCALE GENOMIC DNA]</scope>
    <source>
        <strain>TN</strain>
    </source>
</reference>